<dbReference type="EC" id="3.1.2.6"/>
<dbReference type="EMBL" id="U30264">
    <property type="protein sequence ID" value="AAC46899.1"/>
    <property type="molecule type" value="mRNA"/>
</dbReference>
<dbReference type="FunCoup" id="Q26547">
    <property type="interactions" value="855"/>
</dbReference>
<dbReference type="STRING" id="6183.Q26547"/>
<dbReference type="eggNOG" id="KOG0813">
    <property type="taxonomic scope" value="Eukaryota"/>
</dbReference>
<dbReference type="HOGENOM" id="CLU_030571_4_0_1"/>
<dbReference type="InParanoid" id="Q26547"/>
<dbReference type="UniPathway" id="UPA00619">
    <property type="reaction ID" value="UER00676"/>
</dbReference>
<dbReference type="Proteomes" id="UP000008854">
    <property type="component" value="Unassembled WGS sequence"/>
</dbReference>
<dbReference type="GO" id="GO:0004416">
    <property type="term" value="F:hydroxyacylglutathione hydrolase activity"/>
    <property type="evidence" value="ECO:0007669"/>
    <property type="project" value="UniProtKB-EC"/>
</dbReference>
<dbReference type="GO" id="GO:0046872">
    <property type="term" value="F:metal ion binding"/>
    <property type="evidence" value="ECO:0007669"/>
    <property type="project" value="UniProtKB-KW"/>
</dbReference>
<dbReference type="GO" id="GO:0019243">
    <property type="term" value="P:methylglyoxal catabolic process to D-lactate via S-lactoyl-glutathione"/>
    <property type="evidence" value="ECO:0007669"/>
    <property type="project" value="InterPro"/>
</dbReference>
<dbReference type="CDD" id="cd07723">
    <property type="entry name" value="hydroxyacylglutathione_hydrolase_MBL-fold"/>
    <property type="match status" value="1"/>
</dbReference>
<dbReference type="Gene3D" id="3.60.15.10">
    <property type="entry name" value="Ribonuclease Z/Hydroxyacylglutathione hydrolase-like"/>
    <property type="match status" value="1"/>
</dbReference>
<dbReference type="InterPro" id="IPR035680">
    <property type="entry name" value="Clx_II_MBL"/>
</dbReference>
<dbReference type="InterPro" id="IPR032282">
    <property type="entry name" value="HAGH_C"/>
</dbReference>
<dbReference type="InterPro" id="IPR017782">
    <property type="entry name" value="Hydroxyacylglutathione_Hdrlase"/>
</dbReference>
<dbReference type="InterPro" id="IPR001279">
    <property type="entry name" value="Metallo-B-lactamas"/>
</dbReference>
<dbReference type="InterPro" id="IPR036866">
    <property type="entry name" value="RibonucZ/Hydroxyglut_hydro"/>
</dbReference>
<dbReference type="NCBIfam" id="TIGR03413">
    <property type="entry name" value="GSH_gloB"/>
    <property type="match status" value="1"/>
</dbReference>
<dbReference type="PANTHER" id="PTHR11935">
    <property type="entry name" value="BETA LACTAMASE DOMAIN"/>
    <property type="match status" value="1"/>
</dbReference>
<dbReference type="PANTHER" id="PTHR11935:SF94">
    <property type="entry name" value="TENZING NORGAY, ISOFORM C"/>
    <property type="match status" value="1"/>
</dbReference>
<dbReference type="Pfam" id="PF16123">
    <property type="entry name" value="HAGH_C"/>
    <property type="match status" value="1"/>
</dbReference>
<dbReference type="Pfam" id="PF00753">
    <property type="entry name" value="Lactamase_B"/>
    <property type="match status" value="1"/>
</dbReference>
<dbReference type="SMART" id="SM00849">
    <property type="entry name" value="Lactamase_B"/>
    <property type="match status" value="1"/>
</dbReference>
<dbReference type="SUPFAM" id="SSF56281">
    <property type="entry name" value="Metallo-hydrolase/oxidoreductase"/>
    <property type="match status" value="1"/>
</dbReference>
<reference key="1">
    <citation type="journal article" date="1995" name="J. Biol. Chem.">
        <title>RNA trans-splicing in flatworms. Analysis of trans-spliced mRNAs and genes in the human parasite, Schistosoma mansoni.</title>
        <authorList>
            <person name="Davis R.E."/>
            <person name="Hardwick C."/>
            <person name="Tavernier P."/>
            <person name="Hodgson S."/>
            <person name="Singh H."/>
        </authorList>
    </citation>
    <scope>NUCLEOTIDE SEQUENCE [MRNA]</scope>
    <source>
        <strain>Puerto Rican</strain>
    </source>
</reference>
<feature type="chain" id="PRO_0000192345" description="Probable hydroxyacylglutathione hydrolase">
    <location>
        <begin position="1"/>
        <end position="240"/>
    </location>
</feature>
<feature type="binding site" evidence="2">
    <location>
        <position position="33"/>
    </location>
    <ligand>
        <name>Zn(2+)</name>
        <dbReference type="ChEBI" id="CHEBI:29105"/>
        <label>1</label>
    </ligand>
</feature>
<feature type="binding site" evidence="2">
    <location>
        <position position="35"/>
    </location>
    <ligand>
        <name>Zn(2+)</name>
        <dbReference type="ChEBI" id="CHEBI:29105"/>
        <label>1</label>
    </ligand>
</feature>
<feature type="binding site" evidence="2">
    <location>
        <position position="37"/>
    </location>
    <ligand>
        <name>Zn(2+)</name>
        <dbReference type="ChEBI" id="CHEBI:29105"/>
        <label>2</label>
    </ligand>
</feature>
<feature type="binding site" evidence="2">
    <location>
        <position position="38"/>
    </location>
    <ligand>
        <name>Zn(2+)</name>
        <dbReference type="ChEBI" id="CHEBI:29105"/>
        <label>2</label>
    </ligand>
</feature>
<feature type="binding site" evidence="2">
    <location>
        <position position="95"/>
    </location>
    <ligand>
        <name>Zn(2+)</name>
        <dbReference type="ChEBI" id="CHEBI:29105"/>
        <label>1</label>
    </ligand>
</feature>
<feature type="binding site" evidence="2">
    <location>
        <position position="119"/>
    </location>
    <ligand>
        <name>Zn(2+)</name>
        <dbReference type="ChEBI" id="CHEBI:29105"/>
        <label>1</label>
    </ligand>
</feature>
<feature type="binding site" evidence="2">
    <location>
        <position position="119"/>
    </location>
    <ligand>
        <name>Zn(2+)</name>
        <dbReference type="ChEBI" id="CHEBI:29105"/>
        <label>2</label>
    </ligand>
</feature>
<feature type="binding site" evidence="1">
    <location>
        <position position="128"/>
    </location>
    <ligand>
        <name>substrate</name>
    </ligand>
</feature>
<feature type="binding site" evidence="2">
    <location>
        <begin position="158"/>
        <end position="160"/>
    </location>
    <ligand>
        <name>substrate</name>
    </ligand>
</feature>
<feature type="binding site" evidence="2">
    <location>
        <position position="158"/>
    </location>
    <ligand>
        <name>Zn(2+)</name>
        <dbReference type="ChEBI" id="CHEBI:29105"/>
        <label>2</label>
    </ligand>
</feature>
<feature type="binding site" evidence="2">
    <location>
        <begin position="234"/>
        <end position="237"/>
    </location>
    <ligand>
        <name>substrate</name>
    </ligand>
</feature>
<sequence>MSSEQLQDPVEPDKILSAVTQRGLRLESILTTHHHLDHAGGNLDLVTKCRKQGLEGLKVYGGDDRIGGLTDTVSHGYKXRLVATSTFIAWLHHRHTTGHICYLVTEENSTKEGAVFTGDTLFLGGCGRFFEGTAEQMFKALIEVLSKLPTTTKVYCGHEYTVKNLEFGLTVEPKNEALKHRLEAVKRLRASNQASVPGTIGEELATNPLMRVSEPDVLAHAKTTDPIKAMKTIREEKDRF</sequence>
<evidence type="ECO:0000250" key="1"/>
<evidence type="ECO:0000250" key="2">
    <source>
        <dbReference type="UniProtKB" id="Q16775"/>
    </source>
</evidence>
<evidence type="ECO:0000305" key="3"/>
<organism>
    <name type="scientific">Schistosoma mansoni</name>
    <name type="common">Blood fluke</name>
    <dbReference type="NCBI Taxonomy" id="6183"/>
    <lineage>
        <taxon>Eukaryota</taxon>
        <taxon>Metazoa</taxon>
        <taxon>Spiralia</taxon>
        <taxon>Lophotrochozoa</taxon>
        <taxon>Platyhelminthes</taxon>
        <taxon>Trematoda</taxon>
        <taxon>Digenea</taxon>
        <taxon>Strigeidida</taxon>
        <taxon>Schistosomatoidea</taxon>
        <taxon>Schistosomatidae</taxon>
        <taxon>Schistosoma</taxon>
    </lineage>
</organism>
<accession>Q26547</accession>
<protein>
    <recommendedName>
        <fullName>Probable hydroxyacylglutathione hydrolase</fullName>
        <ecNumber>3.1.2.6</ecNumber>
    </recommendedName>
    <alternativeName>
        <fullName>Glyoxalase II</fullName>
        <shortName>Glx II</shortName>
    </alternativeName>
</protein>
<comment type="function">
    <text>Thiolesterase that catalyzes the hydrolysis of S-D-lactoyl-glutathione to form glutathione and D-lactic acid.</text>
</comment>
<comment type="catalytic activity">
    <reaction>
        <text>an S-(2-hydroxyacyl)glutathione + H2O = a 2-hydroxy carboxylate + glutathione + H(+)</text>
        <dbReference type="Rhea" id="RHEA:21864"/>
        <dbReference type="ChEBI" id="CHEBI:15377"/>
        <dbReference type="ChEBI" id="CHEBI:15378"/>
        <dbReference type="ChEBI" id="CHEBI:57925"/>
        <dbReference type="ChEBI" id="CHEBI:58896"/>
        <dbReference type="ChEBI" id="CHEBI:71261"/>
        <dbReference type="EC" id="3.1.2.6"/>
    </reaction>
</comment>
<comment type="cofactor">
    <cofactor evidence="2">
        <name>Zn(2+)</name>
        <dbReference type="ChEBI" id="CHEBI:29105"/>
    </cofactor>
    <text evidence="2">Binds 2 Zn(2+) ions per subunit.</text>
</comment>
<comment type="pathway">
    <text>Secondary metabolite metabolism; methylglyoxal degradation; (R)-lactate from methylglyoxal: step 2/2.</text>
</comment>
<comment type="similarity">
    <text evidence="3">Belongs to the metallo-beta-lactamase superfamily. Glyoxalase II family.</text>
</comment>
<keyword id="KW-0378">Hydrolase</keyword>
<keyword id="KW-0479">Metal-binding</keyword>
<keyword id="KW-1185">Reference proteome</keyword>
<keyword id="KW-0862">Zinc</keyword>
<proteinExistence type="evidence at transcript level"/>
<name>GLO2_SCHMA</name>